<dbReference type="EMBL" id="AB026632">
    <property type="protein sequence ID" value="BAA97494.1"/>
    <property type="status" value="ALT_SEQ"/>
    <property type="molecule type" value="Genomic_DNA"/>
</dbReference>
<dbReference type="EMBL" id="CP002688">
    <property type="protein sequence ID" value="AED97285.1"/>
    <property type="molecule type" value="Genomic_DNA"/>
</dbReference>
<dbReference type="RefSeq" id="NP_001119463.2">
    <property type="nucleotide sequence ID" value="NM_001125991.3"/>
</dbReference>
<dbReference type="RefSeq" id="NP_001331554.1">
    <property type="nucleotide sequence ID" value="NM_001345399.1"/>
</dbReference>
<dbReference type="SMR" id="Q9LST3"/>
<dbReference type="BioGRID" id="927206">
    <property type="interactions" value="32"/>
</dbReference>
<dbReference type="FunCoup" id="Q9LST3">
    <property type="interactions" value="1"/>
</dbReference>
<dbReference type="IntAct" id="Q9LST3">
    <property type="interactions" value="32"/>
</dbReference>
<dbReference type="STRING" id="3702.Q9LST3"/>
<dbReference type="PaxDb" id="3702-AT5G60142.1"/>
<dbReference type="EnsemblPlants" id="AT5G60142.1">
    <property type="protein sequence ID" value="AT5G60142.1"/>
    <property type="gene ID" value="AT5G60142"/>
</dbReference>
<dbReference type="GeneID" id="6241172"/>
<dbReference type="Gramene" id="AT5G60142.1">
    <property type="protein sequence ID" value="AT5G60142.1"/>
    <property type="gene ID" value="AT5G60142"/>
</dbReference>
<dbReference type="KEGG" id="ath:AT5G60142"/>
<dbReference type="Araport" id="AT5G60142"/>
<dbReference type="TAIR" id="AT5G60142"/>
<dbReference type="HOGENOM" id="CLU_048511_0_0_1"/>
<dbReference type="InParanoid" id="Q9LST3"/>
<dbReference type="PRO" id="PR:Q9LST3"/>
<dbReference type="Proteomes" id="UP000006548">
    <property type="component" value="Chromosome 5"/>
</dbReference>
<dbReference type="ExpressionAtlas" id="Q9LST3">
    <property type="expression patterns" value="baseline and differential"/>
</dbReference>
<dbReference type="GO" id="GO:0005634">
    <property type="term" value="C:nucleus"/>
    <property type="evidence" value="ECO:0007669"/>
    <property type="project" value="UniProtKB-SubCell"/>
</dbReference>
<dbReference type="GO" id="GO:0003677">
    <property type="term" value="F:DNA binding"/>
    <property type="evidence" value="ECO:0007669"/>
    <property type="project" value="UniProtKB-KW"/>
</dbReference>
<dbReference type="CDD" id="cd10017">
    <property type="entry name" value="B3_DNA"/>
    <property type="match status" value="1"/>
</dbReference>
<dbReference type="Gene3D" id="2.40.330.10">
    <property type="entry name" value="DNA-binding pseudobarrel domain"/>
    <property type="match status" value="2"/>
</dbReference>
<dbReference type="InterPro" id="IPR003340">
    <property type="entry name" value="B3_DNA-bd"/>
</dbReference>
<dbReference type="InterPro" id="IPR015300">
    <property type="entry name" value="DNA-bd_pseudobarrel_sf"/>
</dbReference>
<dbReference type="InterPro" id="IPR050655">
    <property type="entry name" value="Plant_B3_domain"/>
</dbReference>
<dbReference type="PANTHER" id="PTHR31920">
    <property type="entry name" value="B3 DOMAIN-CONTAINING"/>
    <property type="match status" value="1"/>
</dbReference>
<dbReference type="PANTHER" id="PTHR31920:SF32">
    <property type="entry name" value="B3 DOMAIN-CONTAINING PROTEIN REM22"/>
    <property type="match status" value="1"/>
</dbReference>
<dbReference type="Pfam" id="PF02362">
    <property type="entry name" value="B3"/>
    <property type="match status" value="1"/>
</dbReference>
<dbReference type="SMART" id="SM01019">
    <property type="entry name" value="B3"/>
    <property type="match status" value="2"/>
</dbReference>
<dbReference type="SUPFAM" id="SSF101936">
    <property type="entry name" value="DNA-binding pseudobarrel domain"/>
    <property type="match status" value="2"/>
</dbReference>
<dbReference type="PROSITE" id="PS50863">
    <property type="entry name" value="B3"/>
    <property type="match status" value="1"/>
</dbReference>
<sequence>MMNRGISVDDCLPKFFKVYLPDDSGDDLELPISFNSFLPKSLPKNVIVRSIYGNIWKVAFRKFCGDSERFVMVNGWKKIVKDEDLKGGEFLEFEFDGSWCFNFCIYGRATCKRLRSSVQITVLDDNDDGFNDDQDYGEEVKSSENFIVLDDDDISDVQDYNEEDTSSEDITALDDADNDDINDVQDYVEEDTSSEDIIVIDDDDDDDDQDYGDDDHADVEKERWRGVKTEKKKKGSSGEHDRQYLDNHMNPFFTVNQHRQIKYNMLRIPTKVITKYGLHFPEFINLIDPLEKNFGKLKRKVKGQTIKGFRSIIRRNNVKLNDKVICELEKEMDGLVREIKVHVIRG</sequence>
<comment type="interaction">
    <interactant intactId="EBI-15192745">
        <id>Q9LST3</id>
    </interactant>
    <interactant intactId="EBI-15194681">
        <id>Q9C517</id>
        <label>At1g66420</label>
    </interactant>
    <organismsDiffer>false</organismsDiffer>
    <experiments>3</experiments>
</comment>
<comment type="interaction">
    <interactant intactId="EBI-15192745">
        <id>Q9LST3</id>
    </interactant>
    <interactant intactId="EBI-15193203">
        <id>Q9C6K4</id>
        <label>At1g76870</label>
    </interactant>
    <organismsDiffer>false</organismsDiffer>
    <experiments>3</experiments>
</comment>
<comment type="interaction">
    <interactant intactId="EBI-15192745">
        <id>Q9LST3</id>
    </interactant>
    <interactant intactId="EBI-15191723">
        <id>Q9ASZ1</id>
        <label>GEBP</label>
    </interactant>
    <organismsDiffer>false</organismsDiffer>
    <experiments>3</experiments>
</comment>
<comment type="interaction">
    <interactant intactId="EBI-15192745">
        <id>Q9LST3</id>
    </interactant>
    <interactant intactId="EBI-3946434">
        <id>Q38828</id>
        <label>IAA10</label>
    </interactant>
    <organismsDiffer>false</organismsDiffer>
    <experiments>3</experiments>
</comment>
<comment type="interaction">
    <interactant intactId="EBI-15192745">
        <id>Q9LST3</id>
    </interactant>
    <interactant intactId="EBI-307174">
        <id>Q38822</id>
        <label>IAA3</label>
    </interactant>
    <organismsDiffer>false</organismsDiffer>
    <experiments>3</experiments>
</comment>
<comment type="interaction">
    <interactant intactId="EBI-15192745">
        <id>Q9LST3</id>
    </interactant>
    <interactant intactId="EBI-3946408">
        <id>Q8H174</id>
        <label>IAA31</label>
    </interactant>
    <organismsDiffer>false</organismsDiffer>
    <experiments>3</experiments>
</comment>
<comment type="interaction">
    <interactant intactId="EBI-15192745">
        <id>Q9LST3</id>
    </interactant>
    <interactant intactId="EBI-3946459">
        <id>Q9C5X0</id>
        <label>IAA34</label>
    </interactant>
    <organismsDiffer>false</organismsDiffer>
    <experiments>3</experiments>
</comment>
<comment type="interaction">
    <interactant intactId="EBI-15192745">
        <id>Q9LST3</id>
    </interactant>
    <interactant intactId="EBI-632216">
        <id>Q38827</id>
        <label>IAA9</label>
    </interactant>
    <organismsDiffer>false</organismsDiffer>
    <experiments>3</experiments>
</comment>
<comment type="interaction">
    <interactant intactId="EBI-15192745">
        <id>Q9LST3</id>
    </interactant>
    <interactant intactId="EBI-4424255">
        <id>Q8LG05</id>
        <label>STKL1</label>
    </interactant>
    <organismsDiffer>false</organismsDiffer>
    <experiments>3</experiments>
</comment>
<comment type="interaction">
    <interactant intactId="EBI-15192745">
        <id>Q9LST3</id>
    </interactant>
    <interactant intactId="EBI-15193247">
        <id>O23077</id>
        <label>STKL2</label>
    </interactant>
    <organismsDiffer>false</organismsDiffer>
    <experiments>3</experiments>
</comment>
<comment type="subcellular location">
    <subcellularLocation>
        <location evidence="1">Nucleus</location>
    </subcellularLocation>
</comment>
<comment type="sequence caution" evidence="3">
    <conflict type="erroneous gene model prediction">
        <sequence resource="EMBL-CDS" id="BAA97494"/>
    </conflict>
</comment>
<proteinExistence type="evidence at transcript level"/>
<organism>
    <name type="scientific">Arabidopsis thaliana</name>
    <name type="common">Mouse-ear cress</name>
    <dbReference type="NCBI Taxonomy" id="3702"/>
    <lineage>
        <taxon>Eukaryota</taxon>
        <taxon>Viridiplantae</taxon>
        <taxon>Streptophyta</taxon>
        <taxon>Embryophyta</taxon>
        <taxon>Tracheophyta</taxon>
        <taxon>Spermatophyta</taxon>
        <taxon>Magnoliopsida</taxon>
        <taxon>eudicotyledons</taxon>
        <taxon>Gunneridae</taxon>
        <taxon>Pentapetalae</taxon>
        <taxon>rosids</taxon>
        <taxon>malvids</taxon>
        <taxon>Brassicales</taxon>
        <taxon>Brassicaceae</taxon>
        <taxon>Camelineae</taxon>
        <taxon>Arabidopsis</taxon>
    </lineage>
</organism>
<name>Y5142_ARATH</name>
<accession>Q9LST3</accession>
<accession>F4JXH4</accession>
<evidence type="ECO:0000255" key="1">
    <source>
        <dbReference type="PROSITE-ProRule" id="PRU00326"/>
    </source>
</evidence>
<evidence type="ECO:0000256" key="2">
    <source>
        <dbReference type="SAM" id="MobiDB-lite"/>
    </source>
</evidence>
<evidence type="ECO:0000305" key="3"/>
<protein>
    <recommendedName>
        <fullName>B3 domain-containing protein At5g60142</fullName>
    </recommendedName>
</protein>
<reference key="1">
    <citation type="submission" date="1999-04" db="EMBL/GenBank/DDBJ databases">
        <title>Structural analysis of Arabidopsis thaliana chromosome 5. XI.</title>
        <authorList>
            <person name="Kaneko T."/>
            <person name="Katoh T."/>
            <person name="Asamizu E."/>
            <person name="Sato S."/>
            <person name="Nakamura Y."/>
            <person name="Kotani H."/>
            <person name="Tabata S."/>
        </authorList>
    </citation>
    <scope>NUCLEOTIDE SEQUENCE [LARGE SCALE GENOMIC DNA]</scope>
    <source>
        <strain>cv. Columbia</strain>
    </source>
</reference>
<reference key="2">
    <citation type="journal article" date="2017" name="Plant J.">
        <title>Araport11: a complete reannotation of the Arabidopsis thaliana reference genome.</title>
        <authorList>
            <person name="Cheng C.Y."/>
            <person name="Krishnakumar V."/>
            <person name="Chan A.P."/>
            <person name="Thibaud-Nissen F."/>
            <person name="Schobel S."/>
            <person name="Town C.D."/>
        </authorList>
    </citation>
    <scope>GENOME REANNOTATION</scope>
    <source>
        <strain>cv. Columbia</strain>
    </source>
</reference>
<reference key="3">
    <citation type="journal article" date="2008" name="Trends Plant Sci.">
        <title>The plant B3 superfamily.</title>
        <authorList>
            <person name="Swaminathan K."/>
            <person name="Peterson K."/>
            <person name="Jack T."/>
        </authorList>
    </citation>
    <scope>GENE FAMILY</scope>
</reference>
<gene>
    <name type="ordered locus">At5g60142</name>
    <name type="ORF">F15L12</name>
</gene>
<keyword id="KW-0238">DNA-binding</keyword>
<keyword id="KW-0539">Nucleus</keyword>
<keyword id="KW-1185">Reference proteome</keyword>
<keyword id="KW-0804">Transcription</keyword>
<keyword id="KW-0805">Transcription regulation</keyword>
<feature type="chain" id="PRO_0000375151" description="B3 domain-containing protein At5g60142">
    <location>
        <begin position="1"/>
        <end position="346"/>
    </location>
</feature>
<feature type="DNA-binding region" description="TF-B3" evidence="1">
    <location>
        <begin position="13"/>
        <end position="109"/>
    </location>
</feature>
<feature type="region of interest" description="Disordered" evidence="2">
    <location>
        <begin position="158"/>
        <end position="179"/>
    </location>
</feature>
<feature type="region of interest" description="Disordered" evidence="2">
    <location>
        <begin position="192"/>
        <end position="243"/>
    </location>
</feature>
<feature type="compositionally biased region" description="Acidic residues" evidence="2">
    <location>
        <begin position="192"/>
        <end position="217"/>
    </location>
</feature>
<feature type="compositionally biased region" description="Basic and acidic residues" evidence="2">
    <location>
        <begin position="218"/>
        <end position="229"/>
    </location>
</feature>